<accession>Q8W117</accession>
<accession>Q9C9T9</accession>
<gene>
    <name type="primary">SMU1</name>
    <name type="ordered locus">At1g73720</name>
    <name type="ORF">F25P22.14</name>
</gene>
<keyword id="KW-0007">Acetylation</keyword>
<keyword id="KW-0507">mRNA processing</keyword>
<keyword id="KW-0508">mRNA splicing</keyword>
<keyword id="KW-0539">Nucleus</keyword>
<keyword id="KW-1185">Reference proteome</keyword>
<keyword id="KW-0677">Repeat</keyword>
<keyword id="KW-0747">Spliceosome</keyword>
<keyword id="KW-0853">WD repeat</keyword>
<protein>
    <recommendedName>
        <fullName>Suppressor of mec-8 and unc-52 protein homolog 1</fullName>
        <shortName>AtSMU-1</shortName>
    </recommendedName>
    <alternativeName>
        <fullName>RNA splicing protein SMU1</fullName>
    </alternativeName>
    <alternativeName>
        <fullName>WD40 repeat-containing protein SMU1</fullName>
    </alternativeName>
</protein>
<organism>
    <name type="scientific">Arabidopsis thaliana</name>
    <name type="common">Mouse-ear cress</name>
    <dbReference type="NCBI Taxonomy" id="3702"/>
    <lineage>
        <taxon>Eukaryota</taxon>
        <taxon>Viridiplantae</taxon>
        <taxon>Streptophyta</taxon>
        <taxon>Embryophyta</taxon>
        <taxon>Tracheophyta</taxon>
        <taxon>Spermatophyta</taxon>
        <taxon>Magnoliopsida</taxon>
        <taxon>eudicotyledons</taxon>
        <taxon>Gunneridae</taxon>
        <taxon>Pentapetalae</taxon>
        <taxon>rosids</taxon>
        <taxon>malvids</taxon>
        <taxon>Brassicales</taxon>
        <taxon>Brassicaceae</taxon>
        <taxon>Camelineae</taxon>
        <taxon>Arabidopsis</taxon>
    </lineage>
</organism>
<dbReference type="EMBL" id="AC012679">
    <property type="protein sequence ID" value="AAG52064.1"/>
    <property type="status" value="ALT_SEQ"/>
    <property type="molecule type" value="Genomic_DNA"/>
</dbReference>
<dbReference type="EMBL" id="CP002684">
    <property type="protein sequence ID" value="AEE35501.1"/>
    <property type="molecule type" value="Genomic_DNA"/>
</dbReference>
<dbReference type="EMBL" id="AF462796">
    <property type="protein sequence ID" value="AAL58892.1"/>
    <property type="molecule type" value="mRNA"/>
</dbReference>
<dbReference type="EMBL" id="AY102129">
    <property type="protein sequence ID" value="AAM26696.1"/>
    <property type="molecule type" value="mRNA"/>
</dbReference>
<dbReference type="PIR" id="D96764">
    <property type="entry name" value="D96764"/>
</dbReference>
<dbReference type="RefSeq" id="NP_177513.2">
    <property type="nucleotide sequence ID" value="NM_106031.4"/>
</dbReference>
<dbReference type="SMR" id="Q8W117"/>
<dbReference type="BioGRID" id="28926">
    <property type="interactions" value="20"/>
</dbReference>
<dbReference type="FunCoup" id="Q8W117">
    <property type="interactions" value="4806"/>
</dbReference>
<dbReference type="IntAct" id="Q8W117">
    <property type="interactions" value="3"/>
</dbReference>
<dbReference type="STRING" id="3702.Q8W117"/>
<dbReference type="iPTMnet" id="Q8W117"/>
<dbReference type="PaxDb" id="3702-AT1G73720.1"/>
<dbReference type="ProteomicsDB" id="228449"/>
<dbReference type="EnsemblPlants" id="AT1G73720.1">
    <property type="protein sequence ID" value="AT1G73720.1"/>
    <property type="gene ID" value="AT1G73720"/>
</dbReference>
<dbReference type="GeneID" id="843707"/>
<dbReference type="Gramene" id="AT1G73720.1">
    <property type="protein sequence ID" value="AT1G73720.1"/>
    <property type="gene ID" value="AT1G73720"/>
</dbReference>
<dbReference type="KEGG" id="ath:AT1G73720"/>
<dbReference type="Araport" id="AT1G73720"/>
<dbReference type="TAIR" id="AT1G73720">
    <property type="gene designation" value="SMU1"/>
</dbReference>
<dbReference type="eggNOG" id="KOG0275">
    <property type="taxonomic scope" value="Eukaryota"/>
</dbReference>
<dbReference type="HOGENOM" id="CLU_000288_57_38_1"/>
<dbReference type="InParanoid" id="Q8W117"/>
<dbReference type="OMA" id="MMKQQEP"/>
<dbReference type="PhylomeDB" id="Q8W117"/>
<dbReference type="PRO" id="PR:Q8W117"/>
<dbReference type="Proteomes" id="UP000006548">
    <property type="component" value="Chromosome 1"/>
</dbReference>
<dbReference type="ExpressionAtlas" id="Q8W117">
    <property type="expression patterns" value="baseline and differential"/>
</dbReference>
<dbReference type="GO" id="GO:0080008">
    <property type="term" value="C:Cul4-RING E3 ubiquitin ligase complex"/>
    <property type="evidence" value="ECO:0000250"/>
    <property type="project" value="TAIR"/>
</dbReference>
<dbReference type="GO" id="GO:0016607">
    <property type="term" value="C:nuclear speck"/>
    <property type="evidence" value="ECO:0000314"/>
    <property type="project" value="TAIR"/>
</dbReference>
<dbReference type="GO" id="GO:0005634">
    <property type="term" value="C:nucleus"/>
    <property type="evidence" value="ECO:0000314"/>
    <property type="project" value="TAIR"/>
</dbReference>
<dbReference type="GO" id="GO:0005681">
    <property type="term" value="C:spliceosomal complex"/>
    <property type="evidence" value="ECO:0007669"/>
    <property type="project" value="UniProtKB-KW"/>
</dbReference>
<dbReference type="GO" id="GO:0000398">
    <property type="term" value="P:mRNA splicing, via spliceosome"/>
    <property type="evidence" value="ECO:0007669"/>
    <property type="project" value="InterPro"/>
</dbReference>
<dbReference type="GO" id="GO:0008380">
    <property type="term" value="P:RNA splicing"/>
    <property type="evidence" value="ECO:0000315"/>
    <property type="project" value="TAIR"/>
</dbReference>
<dbReference type="CDD" id="cd00200">
    <property type="entry name" value="WD40"/>
    <property type="match status" value="1"/>
</dbReference>
<dbReference type="FunFam" id="2.130.10.10:FF:000140">
    <property type="entry name" value="SMU1, DNA replication regulator and spliceosomal factor"/>
    <property type="match status" value="1"/>
</dbReference>
<dbReference type="Gene3D" id="2.130.10.10">
    <property type="entry name" value="YVTN repeat-like/Quinoprotein amine dehydrogenase"/>
    <property type="match status" value="1"/>
</dbReference>
<dbReference type="InterPro" id="IPR006595">
    <property type="entry name" value="CTLH_C"/>
</dbReference>
<dbReference type="InterPro" id="IPR020472">
    <property type="entry name" value="G-protein_beta_WD-40_rep"/>
</dbReference>
<dbReference type="InterPro" id="IPR006594">
    <property type="entry name" value="LisH"/>
</dbReference>
<dbReference type="InterPro" id="IPR045184">
    <property type="entry name" value="SMU1"/>
</dbReference>
<dbReference type="InterPro" id="IPR054532">
    <property type="entry name" value="TPL_SMU1_LisH-like"/>
</dbReference>
<dbReference type="InterPro" id="IPR015943">
    <property type="entry name" value="WD40/YVTN_repeat-like_dom_sf"/>
</dbReference>
<dbReference type="InterPro" id="IPR036322">
    <property type="entry name" value="WD40_repeat_dom_sf"/>
</dbReference>
<dbReference type="InterPro" id="IPR001680">
    <property type="entry name" value="WD40_rpt"/>
</dbReference>
<dbReference type="PANTHER" id="PTHR22848">
    <property type="entry name" value="WD40 REPEAT PROTEIN"/>
    <property type="match status" value="1"/>
</dbReference>
<dbReference type="Pfam" id="PF17814">
    <property type="entry name" value="LisH_TPL"/>
    <property type="match status" value="1"/>
</dbReference>
<dbReference type="Pfam" id="PF00400">
    <property type="entry name" value="WD40"/>
    <property type="match status" value="5"/>
</dbReference>
<dbReference type="PRINTS" id="PR00320">
    <property type="entry name" value="GPROTEINBRPT"/>
</dbReference>
<dbReference type="SMART" id="SM00668">
    <property type="entry name" value="CTLH"/>
    <property type="match status" value="1"/>
</dbReference>
<dbReference type="SMART" id="SM00667">
    <property type="entry name" value="LisH"/>
    <property type="match status" value="1"/>
</dbReference>
<dbReference type="SMART" id="SM00320">
    <property type="entry name" value="WD40"/>
    <property type="match status" value="7"/>
</dbReference>
<dbReference type="SUPFAM" id="SSF50978">
    <property type="entry name" value="WD40 repeat-like"/>
    <property type="match status" value="1"/>
</dbReference>
<dbReference type="PROSITE" id="PS50897">
    <property type="entry name" value="CTLH"/>
    <property type="match status" value="1"/>
</dbReference>
<dbReference type="PROSITE" id="PS50896">
    <property type="entry name" value="LISH"/>
    <property type="match status" value="1"/>
</dbReference>
<dbReference type="PROSITE" id="PS00678">
    <property type="entry name" value="WD_REPEATS_1"/>
    <property type="match status" value="1"/>
</dbReference>
<dbReference type="PROSITE" id="PS50082">
    <property type="entry name" value="WD_REPEATS_2"/>
    <property type="match status" value="5"/>
</dbReference>
<dbReference type="PROSITE" id="PS50294">
    <property type="entry name" value="WD_REPEATS_REGION"/>
    <property type="match status" value="1"/>
</dbReference>
<evidence type="ECO:0000250" key="1">
    <source>
        <dbReference type="UniProtKB" id="Q2TAY7"/>
    </source>
</evidence>
<evidence type="ECO:0000255" key="2">
    <source>
        <dbReference type="PROSITE-ProRule" id="PRU00058"/>
    </source>
</evidence>
<evidence type="ECO:0000255" key="3">
    <source>
        <dbReference type="PROSITE-ProRule" id="PRU00126"/>
    </source>
</evidence>
<evidence type="ECO:0000269" key="4">
    <source>
    </source>
</evidence>
<evidence type="ECO:0000305" key="5"/>
<evidence type="ECO:0007744" key="6">
    <source>
    </source>
</evidence>
<comment type="function">
    <text evidence="4">Auxiliary spliceosomal protein involved in splicing of specific pre-mRNAs that affect multiple aspects of development. Required for proper accumulation of SMU2.</text>
</comment>
<comment type="subunit">
    <text evidence="1 4">Component of the spliceosome B complex (By similarity). Interacts with SMU2 (PubMed:19734266).</text>
</comment>
<comment type="subcellular location">
    <subcellularLocation>
        <location evidence="4">Nucleus</location>
    </subcellularLocation>
</comment>
<comment type="tissue specificity">
    <text evidence="4">Expressed in actively dividing cells, such as newly emerged leaves and root tips. Detected in embryo, female gametophyte including egg cell, central cell, synergid cells and the antipodal cells, and mature pollen.</text>
</comment>
<comment type="disruption phenotype">
    <text evidence="4">Lethal when homozygous.</text>
</comment>
<comment type="similarity">
    <text evidence="5">Belongs to the WD repeat SMU1 family.</text>
</comment>
<comment type="sequence caution" evidence="5">
    <conflict type="erroneous gene model prediction">
        <sequence resource="EMBL-CDS" id="AAG52064"/>
    </conflict>
</comment>
<name>SMU1_ARATH</name>
<reference key="1">
    <citation type="journal article" date="2000" name="Nature">
        <title>Sequence and analysis of chromosome 1 of the plant Arabidopsis thaliana.</title>
        <authorList>
            <person name="Theologis A."/>
            <person name="Ecker J.R."/>
            <person name="Palm C.J."/>
            <person name="Federspiel N.A."/>
            <person name="Kaul S."/>
            <person name="White O."/>
            <person name="Alonso J."/>
            <person name="Altafi H."/>
            <person name="Araujo R."/>
            <person name="Bowman C.L."/>
            <person name="Brooks S.Y."/>
            <person name="Buehler E."/>
            <person name="Chan A."/>
            <person name="Chao Q."/>
            <person name="Chen H."/>
            <person name="Cheuk R.F."/>
            <person name="Chin C.W."/>
            <person name="Chung M.K."/>
            <person name="Conn L."/>
            <person name="Conway A.B."/>
            <person name="Conway A.R."/>
            <person name="Creasy T.H."/>
            <person name="Dewar K."/>
            <person name="Dunn P."/>
            <person name="Etgu P."/>
            <person name="Feldblyum T.V."/>
            <person name="Feng J.-D."/>
            <person name="Fong B."/>
            <person name="Fujii C.Y."/>
            <person name="Gill J.E."/>
            <person name="Goldsmith A.D."/>
            <person name="Haas B."/>
            <person name="Hansen N.F."/>
            <person name="Hughes B."/>
            <person name="Huizar L."/>
            <person name="Hunter J.L."/>
            <person name="Jenkins J."/>
            <person name="Johnson-Hopson C."/>
            <person name="Khan S."/>
            <person name="Khaykin E."/>
            <person name="Kim C.J."/>
            <person name="Koo H.L."/>
            <person name="Kremenetskaia I."/>
            <person name="Kurtz D.B."/>
            <person name="Kwan A."/>
            <person name="Lam B."/>
            <person name="Langin-Hooper S."/>
            <person name="Lee A."/>
            <person name="Lee J.M."/>
            <person name="Lenz C.A."/>
            <person name="Li J.H."/>
            <person name="Li Y.-P."/>
            <person name="Lin X."/>
            <person name="Liu S.X."/>
            <person name="Liu Z.A."/>
            <person name="Luros J.S."/>
            <person name="Maiti R."/>
            <person name="Marziali A."/>
            <person name="Militscher J."/>
            <person name="Miranda M."/>
            <person name="Nguyen M."/>
            <person name="Nierman W.C."/>
            <person name="Osborne B.I."/>
            <person name="Pai G."/>
            <person name="Peterson J."/>
            <person name="Pham P.K."/>
            <person name="Rizzo M."/>
            <person name="Rooney T."/>
            <person name="Rowley D."/>
            <person name="Sakano H."/>
            <person name="Salzberg S.L."/>
            <person name="Schwartz J.R."/>
            <person name="Shinn P."/>
            <person name="Southwick A.M."/>
            <person name="Sun H."/>
            <person name="Tallon L.J."/>
            <person name="Tambunga G."/>
            <person name="Toriumi M.J."/>
            <person name="Town C.D."/>
            <person name="Utterback T."/>
            <person name="Van Aken S."/>
            <person name="Vaysberg M."/>
            <person name="Vysotskaia V.S."/>
            <person name="Walker M."/>
            <person name="Wu D."/>
            <person name="Yu G."/>
            <person name="Fraser C.M."/>
            <person name="Venter J.C."/>
            <person name="Davis R.W."/>
        </authorList>
    </citation>
    <scope>NUCLEOTIDE SEQUENCE [LARGE SCALE GENOMIC DNA]</scope>
    <source>
        <strain>cv. Columbia</strain>
    </source>
</reference>
<reference key="2">
    <citation type="journal article" date="2017" name="Plant J.">
        <title>Araport11: a complete reannotation of the Arabidopsis thaliana reference genome.</title>
        <authorList>
            <person name="Cheng C.Y."/>
            <person name="Krishnakumar V."/>
            <person name="Chan A.P."/>
            <person name="Thibaud-Nissen F."/>
            <person name="Schobel S."/>
            <person name="Town C.D."/>
        </authorList>
    </citation>
    <scope>GENOME REANNOTATION</scope>
    <source>
        <strain>cv. Columbia</strain>
    </source>
</reference>
<reference key="3">
    <citation type="journal article" date="2003" name="Science">
        <title>Empirical analysis of transcriptional activity in the Arabidopsis genome.</title>
        <authorList>
            <person name="Yamada K."/>
            <person name="Lim J."/>
            <person name="Dale J.M."/>
            <person name="Chen H."/>
            <person name="Shinn P."/>
            <person name="Palm C.J."/>
            <person name="Southwick A.M."/>
            <person name="Wu H.C."/>
            <person name="Kim C.J."/>
            <person name="Nguyen M."/>
            <person name="Pham P.K."/>
            <person name="Cheuk R.F."/>
            <person name="Karlin-Newmann G."/>
            <person name="Liu S.X."/>
            <person name="Lam B."/>
            <person name="Sakano H."/>
            <person name="Wu T."/>
            <person name="Yu G."/>
            <person name="Miranda M."/>
            <person name="Quach H.L."/>
            <person name="Tripp M."/>
            <person name="Chang C.H."/>
            <person name="Lee J.M."/>
            <person name="Toriumi M.J."/>
            <person name="Chan M.M."/>
            <person name="Tang C.C."/>
            <person name="Onodera C.S."/>
            <person name="Deng J.M."/>
            <person name="Akiyama K."/>
            <person name="Ansari Y."/>
            <person name="Arakawa T."/>
            <person name="Banh J."/>
            <person name="Banno F."/>
            <person name="Bowser L."/>
            <person name="Brooks S.Y."/>
            <person name="Carninci P."/>
            <person name="Chao Q."/>
            <person name="Choy N."/>
            <person name="Enju A."/>
            <person name="Goldsmith A.D."/>
            <person name="Gurjal M."/>
            <person name="Hansen N.F."/>
            <person name="Hayashizaki Y."/>
            <person name="Johnson-Hopson C."/>
            <person name="Hsuan V.W."/>
            <person name="Iida K."/>
            <person name="Karnes M."/>
            <person name="Khan S."/>
            <person name="Koesema E."/>
            <person name="Ishida J."/>
            <person name="Jiang P.X."/>
            <person name="Jones T."/>
            <person name="Kawai J."/>
            <person name="Kamiya A."/>
            <person name="Meyers C."/>
            <person name="Nakajima M."/>
            <person name="Narusaka M."/>
            <person name="Seki M."/>
            <person name="Sakurai T."/>
            <person name="Satou M."/>
            <person name="Tamse R."/>
            <person name="Vaysberg M."/>
            <person name="Wallender E.K."/>
            <person name="Wong C."/>
            <person name="Yamamura Y."/>
            <person name="Yuan S."/>
            <person name="Shinozaki K."/>
            <person name="Davis R.W."/>
            <person name="Theologis A."/>
            <person name="Ecker J.R."/>
        </authorList>
    </citation>
    <scope>NUCLEOTIDE SEQUENCE [LARGE SCALE MRNA]</scope>
    <source>
        <strain>cv. Columbia</strain>
    </source>
</reference>
<reference key="4">
    <citation type="journal article" date="2009" name="Plant Physiol.">
        <title>Plant SMU-1 and SMU-2 homologues regulate pre-mRNA splicing and multiple aspects of development.</title>
        <authorList>
            <person name="Chung T."/>
            <person name="Wang D."/>
            <person name="Kim C.S."/>
            <person name="Yadegari R."/>
            <person name="Larkins B.A."/>
        </authorList>
    </citation>
    <scope>FUNCTION</scope>
    <scope>DISRUPTION PHENOTYPE</scope>
    <scope>INTERACTION WITH SMU2</scope>
    <scope>TISSUE SPECIFICITY</scope>
    <scope>SUBCELLULAR LOCATION</scope>
</reference>
<reference key="5">
    <citation type="journal article" date="2012" name="Mol. Cell. Proteomics">
        <title>Comparative large-scale characterisation of plant vs. mammal proteins reveals similar and idiosyncratic N-alpha acetylation features.</title>
        <authorList>
            <person name="Bienvenut W.V."/>
            <person name="Sumpton D."/>
            <person name="Martinez A."/>
            <person name="Lilla S."/>
            <person name="Espagne C."/>
            <person name="Meinnel T."/>
            <person name="Giglione C."/>
        </authorList>
    </citation>
    <scope>ACETYLATION [LARGE SCALE ANALYSIS] AT ALA-2</scope>
    <scope>CLEAVAGE OF INITIATOR METHIONINE [LARGE SCALE ANALYSIS]</scope>
    <scope>IDENTIFICATION BY MASS SPECTROMETRY [LARGE SCALE ANALYSIS]</scope>
</reference>
<feature type="initiator methionine" description="Removed" evidence="6">
    <location>
        <position position="1"/>
    </location>
</feature>
<feature type="chain" id="PRO_0000429841" description="Suppressor of mec-8 and unc-52 protein homolog 1">
    <location>
        <begin position="2"/>
        <end position="511"/>
    </location>
</feature>
<feature type="domain" description="LisH" evidence="3">
    <location>
        <begin position="6"/>
        <end position="38"/>
    </location>
</feature>
<feature type="domain" description="CTLH" evidence="2">
    <location>
        <begin position="40"/>
        <end position="92"/>
    </location>
</feature>
<feature type="repeat" description="WD 1">
    <location>
        <begin position="211"/>
        <end position="252"/>
    </location>
</feature>
<feature type="repeat" description="WD 2">
    <location>
        <begin position="261"/>
        <end position="300"/>
    </location>
</feature>
<feature type="repeat" description="WD 3">
    <location>
        <begin position="303"/>
        <end position="344"/>
    </location>
</feature>
<feature type="repeat" description="WD 4">
    <location>
        <begin position="345"/>
        <end position="384"/>
    </location>
</feature>
<feature type="repeat" description="WD 5">
    <location>
        <begin position="393"/>
        <end position="434"/>
    </location>
</feature>
<feature type="repeat" description="WD 6">
    <location>
        <begin position="480"/>
        <end position="511"/>
    </location>
</feature>
<feature type="modified residue" description="N-acetylalanine" evidence="6">
    <location>
        <position position="2"/>
    </location>
</feature>
<proteinExistence type="evidence at protein level"/>
<sequence>MALEIEARDVIKIMLQFCKENSLNQTFQTLQSECQVSLNTVDSVETFISDINSGRWDSVLPQVSQLKLPRNKLEDLYEQIVLEMIELRELDTARAILRQTQVMGVMKQEQAERYLRMEHLLVRSYFDPHEAYGDSTKERKRAQIAQAVAAEVTVVPPSRLMALIGQALKWQQHQGLLPPGTQFDLFRGTAAMKQDVEDTHPNVLTHTIKFGKKSHAECARFSPDGQFLASSSVDGFIEVWDYISGKLKKDLQYQADESFMMHDDPVLCIDFSRDSEMLASGSQDGKIKIWRIRTGVCIRRFDAHSQGVTSLSFSRDGSQLLSTSFDQTARIHGLKSGKLLKEFRGHTSYVNHAIFTSDGSRIITASSDCTVKVWDSKTTDCLQTFKPPPPLRGTDASVNSIHLFPKNTEHIVVCNKTSSIYIMTLQGQVVKSFSSGNREGGDFVAACVSTKGDWIYCIGEDKKLYCFNYQSGGLEHFMMVHEKDVIGITHHPHRNLLATYSEDCTMKLWKP</sequence>